<feature type="chain" id="PRO_0000415182" description="Probable peptidoglycan glycosyltransferase FtsW">
    <location>
        <begin position="1"/>
        <end position="381"/>
    </location>
</feature>
<feature type="transmembrane region" description="Helical" evidence="1">
    <location>
        <begin position="16"/>
        <end position="36"/>
    </location>
</feature>
<feature type="transmembrane region" description="Helical" evidence="1">
    <location>
        <begin position="56"/>
        <end position="76"/>
    </location>
</feature>
<feature type="transmembrane region" description="Helical" evidence="1">
    <location>
        <begin position="80"/>
        <end position="100"/>
    </location>
</feature>
<feature type="transmembrane region" description="Helical" evidence="1">
    <location>
        <begin position="145"/>
        <end position="165"/>
    </location>
</feature>
<feature type="transmembrane region" description="Helical" evidence="1">
    <location>
        <begin position="168"/>
        <end position="188"/>
    </location>
</feature>
<feature type="transmembrane region" description="Helical" evidence="1">
    <location>
        <begin position="191"/>
        <end position="211"/>
    </location>
</feature>
<feature type="transmembrane region" description="Helical" evidence="1">
    <location>
        <begin position="274"/>
        <end position="294"/>
    </location>
</feature>
<feature type="transmembrane region" description="Helical" evidence="1">
    <location>
        <begin position="312"/>
        <end position="332"/>
    </location>
</feature>
<feature type="transmembrane region" description="Helical" evidence="1">
    <location>
        <begin position="343"/>
        <end position="363"/>
    </location>
</feature>
<dbReference type="EC" id="2.4.99.28" evidence="1"/>
<dbReference type="EMBL" id="CP001089">
    <property type="protein sequence ID" value="ACD94397.1"/>
    <property type="molecule type" value="Genomic_DNA"/>
</dbReference>
<dbReference type="RefSeq" id="WP_012468753.1">
    <property type="nucleotide sequence ID" value="NC_010814.1"/>
</dbReference>
<dbReference type="SMR" id="B3E3Y3"/>
<dbReference type="STRING" id="398767.Glov_0671"/>
<dbReference type="KEGG" id="glo:Glov_0671"/>
<dbReference type="eggNOG" id="COG0772">
    <property type="taxonomic scope" value="Bacteria"/>
</dbReference>
<dbReference type="HOGENOM" id="CLU_029243_0_1_7"/>
<dbReference type="OrthoDB" id="9768187at2"/>
<dbReference type="UniPathway" id="UPA00219"/>
<dbReference type="Proteomes" id="UP000002420">
    <property type="component" value="Chromosome"/>
</dbReference>
<dbReference type="GO" id="GO:0032153">
    <property type="term" value="C:cell division site"/>
    <property type="evidence" value="ECO:0007669"/>
    <property type="project" value="TreeGrafter"/>
</dbReference>
<dbReference type="GO" id="GO:0005886">
    <property type="term" value="C:plasma membrane"/>
    <property type="evidence" value="ECO:0007669"/>
    <property type="project" value="UniProtKB-SubCell"/>
</dbReference>
<dbReference type="GO" id="GO:0015648">
    <property type="term" value="F:lipid-linked peptidoglycan transporter activity"/>
    <property type="evidence" value="ECO:0007669"/>
    <property type="project" value="TreeGrafter"/>
</dbReference>
<dbReference type="GO" id="GO:0008955">
    <property type="term" value="F:peptidoglycan glycosyltransferase activity"/>
    <property type="evidence" value="ECO:0007669"/>
    <property type="project" value="RHEA"/>
</dbReference>
<dbReference type="GO" id="GO:0051301">
    <property type="term" value="P:cell division"/>
    <property type="evidence" value="ECO:0007669"/>
    <property type="project" value="UniProtKB-KW"/>
</dbReference>
<dbReference type="GO" id="GO:0071555">
    <property type="term" value="P:cell wall organization"/>
    <property type="evidence" value="ECO:0007669"/>
    <property type="project" value="UniProtKB-KW"/>
</dbReference>
<dbReference type="GO" id="GO:0009252">
    <property type="term" value="P:peptidoglycan biosynthetic process"/>
    <property type="evidence" value="ECO:0007669"/>
    <property type="project" value="UniProtKB-UniPathway"/>
</dbReference>
<dbReference type="GO" id="GO:0008360">
    <property type="term" value="P:regulation of cell shape"/>
    <property type="evidence" value="ECO:0007669"/>
    <property type="project" value="UniProtKB-KW"/>
</dbReference>
<dbReference type="HAMAP" id="MF_00913">
    <property type="entry name" value="PGT_FtsW_proteobact"/>
    <property type="match status" value="1"/>
</dbReference>
<dbReference type="InterPro" id="IPR018365">
    <property type="entry name" value="Cell_cycle_FtsW-rel_CS"/>
</dbReference>
<dbReference type="InterPro" id="IPR013437">
    <property type="entry name" value="FtsW"/>
</dbReference>
<dbReference type="InterPro" id="IPR001182">
    <property type="entry name" value="FtsW/RodA"/>
</dbReference>
<dbReference type="NCBIfam" id="TIGR02614">
    <property type="entry name" value="ftsW"/>
    <property type="match status" value="1"/>
</dbReference>
<dbReference type="PANTHER" id="PTHR30474">
    <property type="entry name" value="CELL CYCLE PROTEIN"/>
    <property type="match status" value="1"/>
</dbReference>
<dbReference type="PANTHER" id="PTHR30474:SF2">
    <property type="entry name" value="PEPTIDOGLYCAN GLYCOSYLTRANSFERASE FTSW-RELATED"/>
    <property type="match status" value="1"/>
</dbReference>
<dbReference type="Pfam" id="PF01098">
    <property type="entry name" value="FTSW_RODA_SPOVE"/>
    <property type="match status" value="1"/>
</dbReference>
<dbReference type="PROSITE" id="PS00428">
    <property type="entry name" value="FTSW_RODA_SPOVE"/>
    <property type="match status" value="1"/>
</dbReference>
<name>FTSW_TRIL1</name>
<protein>
    <recommendedName>
        <fullName evidence="1">Probable peptidoglycan glycosyltransferase FtsW</fullName>
        <shortName evidence="1">PGT</shortName>
        <ecNumber evidence="1">2.4.99.28</ecNumber>
    </recommendedName>
    <alternativeName>
        <fullName evidence="1">Cell division protein FtsW</fullName>
    </alternativeName>
    <alternativeName>
        <fullName evidence="1">Cell wall polymerase</fullName>
    </alternativeName>
    <alternativeName>
        <fullName evidence="1">Peptidoglycan polymerase</fullName>
        <shortName evidence="1">PG polymerase</shortName>
    </alternativeName>
</protein>
<proteinExistence type="inferred from homology"/>
<reference key="1">
    <citation type="submission" date="2008-05" db="EMBL/GenBank/DDBJ databases">
        <title>Complete sequence of chromosome of Geobacter lovleyi SZ.</title>
        <authorList>
            <consortium name="US DOE Joint Genome Institute"/>
            <person name="Lucas S."/>
            <person name="Copeland A."/>
            <person name="Lapidus A."/>
            <person name="Glavina del Rio T."/>
            <person name="Dalin E."/>
            <person name="Tice H."/>
            <person name="Bruce D."/>
            <person name="Goodwin L."/>
            <person name="Pitluck S."/>
            <person name="Chertkov O."/>
            <person name="Meincke L."/>
            <person name="Brettin T."/>
            <person name="Detter J.C."/>
            <person name="Han C."/>
            <person name="Tapia R."/>
            <person name="Kuske C.R."/>
            <person name="Schmutz J."/>
            <person name="Larimer F."/>
            <person name="Land M."/>
            <person name="Hauser L."/>
            <person name="Kyrpides N."/>
            <person name="Mikhailova N."/>
            <person name="Sung Y."/>
            <person name="Fletcher K.E."/>
            <person name="Ritalahti K.M."/>
            <person name="Loeffler F.E."/>
            <person name="Richardson P."/>
        </authorList>
    </citation>
    <scope>NUCLEOTIDE SEQUENCE [LARGE SCALE GENOMIC DNA]</scope>
    <source>
        <strain>ATCC BAA-1151 / DSM 17278 / SZ</strain>
    </source>
</reference>
<sequence length="381" mass="41612">MLEILRKPFRLAEYDLVLLLMVVALTSFGIVMVYSASSVMAAKNFHDGAYFLKRQLIFALVGCVGALVTMRIDYQLWRRWAVPLLFVSLILLVLVLIPGIGGKVKGASRWIRLPGFNLQPSEFTKIALIMYMAYSIDKKQDRIRLLSAGFLPYMVVLMILLGLLLKQPDMGAALTLAAVTIIMLFAAGTRLIFILGSGMVAMPFVVYLVVHSAYRLKRIKAFLNPEQDPTGIGWQIIQSKYAFGAGGFFGQGLGEGKQKLFYLPEAHTDFILSVIGEELGFIGVIVIIGMFFILVQRAMRIAMAAQDTFGRFLALGIAVLFAIEAVVNMAVVTGLFPTKGLALPFLSYGGSSLLISLFAVGILLNISAGLKLAPLTGKDAK</sequence>
<comment type="function">
    <text evidence="1">Peptidoglycan polymerase that is essential for cell division.</text>
</comment>
<comment type="catalytic activity">
    <reaction evidence="1">
        <text>[GlcNAc-(1-&gt;4)-Mur2Ac(oyl-L-Ala-gamma-D-Glu-L-Lys-D-Ala-D-Ala)](n)-di-trans,octa-cis-undecaprenyl diphosphate + beta-D-GlcNAc-(1-&gt;4)-Mur2Ac(oyl-L-Ala-gamma-D-Glu-L-Lys-D-Ala-D-Ala)-di-trans,octa-cis-undecaprenyl diphosphate = [GlcNAc-(1-&gt;4)-Mur2Ac(oyl-L-Ala-gamma-D-Glu-L-Lys-D-Ala-D-Ala)](n+1)-di-trans,octa-cis-undecaprenyl diphosphate + di-trans,octa-cis-undecaprenyl diphosphate + H(+)</text>
        <dbReference type="Rhea" id="RHEA:23708"/>
        <dbReference type="Rhea" id="RHEA-COMP:9602"/>
        <dbReference type="Rhea" id="RHEA-COMP:9603"/>
        <dbReference type="ChEBI" id="CHEBI:15378"/>
        <dbReference type="ChEBI" id="CHEBI:58405"/>
        <dbReference type="ChEBI" id="CHEBI:60033"/>
        <dbReference type="ChEBI" id="CHEBI:78435"/>
        <dbReference type="EC" id="2.4.99.28"/>
    </reaction>
</comment>
<comment type="pathway">
    <text evidence="1">Cell wall biogenesis; peptidoglycan biosynthesis.</text>
</comment>
<comment type="subcellular location">
    <subcellularLocation>
        <location evidence="1">Cell inner membrane</location>
        <topology evidence="1">Multi-pass membrane protein</topology>
    </subcellularLocation>
    <text evidence="1">Localizes to the division septum.</text>
</comment>
<comment type="similarity">
    <text evidence="1">Belongs to the SEDS family. FtsW subfamily.</text>
</comment>
<gene>
    <name evidence="1" type="primary">ftsW</name>
    <name type="ordered locus">Glov_0671</name>
</gene>
<accession>B3E3Y3</accession>
<organism>
    <name type="scientific">Trichlorobacter lovleyi (strain ATCC BAA-1151 / DSM 17278 / SZ)</name>
    <name type="common">Geobacter lovleyi</name>
    <dbReference type="NCBI Taxonomy" id="398767"/>
    <lineage>
        <taxon>Bacteria</taxon>
        <taxon>Pseudomonadati</taxon>
        <taxon>Thermodesulfobacteriota</taxon>
        <taxon>Desulfuromonadia</taxon>
        <taxon>Geobacterales</taxon>
        <taxon>Geobacteraceae</taxon>
        <taxon>Trichlorobacter</taxon>
    </lineage>
</organism>
<evidence type="ECO:0000255" key="1">
    <source>
        <dbReference type="HAMAP-Rule" id="MF_00913"/>
    </source>
</evidence>
<keyword id="KW-0131">Cell cycle</keyword>
<keyword id="KW-0132">Cell division</keyword>
<keyword id="KW-0997">Cell inner membrane</keyword>
<keyword id="KW-1003">Cell membrane</keyword>
<keyword id="KW-0133">Cell shape</keyword>
<keyword id="KW-0961">Cell wall biogenesis/degradation</keyword>
<keyword id="KW-0328">Glycosyltransferase</keyword>
<keyword id="KW-0472">Membrane</keyword>
<keyword id="KW-0573">Peptidoglycan synthesis</keyword>
<keyword id="KW-1185">Reference proteome</keyword>
<keyword id="KW-0808">Transferase</keyword>
<keyword id="KW-0812">Transmembrane</keyword>
<keyword id="KW-1133">Transmembrane helix</keyword>